<reference key="1">
    <citation type="submission" date="2002-06" db="EMBL/GenBank/DDBJ databases">
        <title>A novel potassium channel blocker from scorpion Buthus martensii Karsch.</title>
        <authorList>
            <person name="Wang C.-G."/>
            <person name="Chi C.-W."/>
        </authorList>
    </citation>
    <scope>NUCLEOTIDE SEQUENCE [MRNA]</scope>
</reference>
<sequence>MKIFFAVLVILVLFSMLIWTAYGAPYPVNCKTDRDCVMCGLGISCKNGYCQSCTR</sequence>
<protein>
    <recommendedName>
        <fullName>Neurotoxin BmKX-A1-S31</fullName>
    </recommendedName>
</protein>
<dbReference type="EMBL" id="AY125327">
    <property type="protein sequence ID" value="AAM91030.1"/>
    <property type="molecule type" value="mRNA"/>
</dbReference>
<dbReference type="SMR" id="Q7Z0H5"/>
<dbReference type="GO" id="GO:0005576">
    <property type="term" value="C:extracellular region"/>
    <property type="evidence" value="ECO:0007669"/>
    <property type="project" value="UniProtKB-SubCell"/>
</dbReference>
<dbReference type="InterPro" id="IPR036574">
    <property type="entry name" value="Scorpion_toxin-like_sf"/>
</dbReference>
<dbReference type="SUPFAM" id="SSF57095">
    <property type="entry name" value="Scorpion toxin-like"/>
    <property type="match status" value="1"/>
</dbReference>
<proteinExistence type="evidence at transcript level"/>
<evidence type="ECO:0000250" key="1"/>
<evidence type="ECO:0000255" key="2"/>
<accession>Q7Z0H5</accession>
<feature type="signal peptide" evidence="2">
    <location>
        <begin position="1"/>
        <end position="23"/>
    </location>
</feature>
<feature type="chain" id="PRO_0000035339" description="Neurotoxin BmKX-A1-S31">
    <location>
        <begin position="24"/>
        <end position="55"/>
    </location>
</feature>
<feature type="disulfide bond" evidence="1">
    <location>
        <begin position="30"/>
        <end position="45"/>
    </location>
</feature>
<feature type="disulfide bond" evidence="1">
    <location>
        <begin position="36"/>
        <end position="50"/>
    </location>
</feature>
<feature type="disulfide bond" evidence="1">
    <location>
        <begin position="39"/>
        <end position="53"/>
    </location>
</feature>
<keyword id="KW-1015">Disulfide bond</keyword>
<keyword id="KW-0964">Secreted</keyword>
<keyword id="KW-0732">Signal</keyword>
<organism>
    <name type="scientific">Olivierus martensii</name>
    <name type="common">Manchurian scorpion</name>
    <name type="synonym">Mesobuthus martensii</name>
    <dbReference type="NCBI Taxonomy" id="34649"/>
    <lineage>
        <taxon>Eukaryota</taxon>
        <taxon>Metazoa</taxon>
        <taxon>Ecdysozoa</taxon>
        <taxon>Arthropoda</taxon>
        <taxon>Chelicerata</taxon>
        <taxon>Arachnida</taxon>
        <taxon>Scorpiones</taxon>
        <taxon>Buthida</taxon>
        <taxon>Buthoidea</taxon>
        <taxon>Buthidae</taxon>
        <taxon>Olivierus</taxon>
    </lineage>
</organism>
<comment type="subcellular location">
    <subcellularLocation>
        <location>Secreted</location>
    </subcellularLocation>
</comment>
<comment type="tissue specificity">
    <text>Expressed by the venom gland.</text>
</comment>
<comment type="miscellaneous">
    <text evidence="1">Negative results: does not show any effect on Na(+), Ca(2+) currents, nor on voltage-gated and calcium-activated potassium channels.</text>
</comment>
<name>SCKJ_OLIMR</name>